<evidence type="ECO:0000250" key="1"/>
<evidence type="ECO:0000256" key="2">
    <source>
        <dbReference type="SAM" id="MobiDB-lite"/>
    </source>
</evidence>
<evidence type="ECO:0000305" key="3"/>
<protein>
    <recommendedName>
        <fullName>Exocyst complex protein EXO70</fullName>
    </recommendedName>
</protein>
<accession>Q5AH25</accession>
<accession>A0A1D8PQZ1</accession>
<accession>Q3MPD8</accession>
<name>EXO70_CANAL</name>
<dbReference type="EMBL" id="AP006852">
    <property type="protein sequence ID" value="BAE44722.1"/>
    <property type="molecule type" value="Genomic_DNA"/>
</dbReference>
<dbReference type="EMBL" id="CP017629">
    <property type="protein sequence ID" value="AOW30568.1"/>
    <property type="molecule type" value="Genomic_DNA"/>
</dbReference>
<dbReference type="RefSeq" id="XP_721350.1">
    <property type="nucleotide sequence ID" value="XM_716257.2"/>
</dbReference>
<dbReference type="SMR" id="Q5AH25"/>
<dbReference type="FunCoup" id="Q5AH25">
    <property type="interactions" value="131"/>
</dbReference>
<dbReference type="STRING" id="237561.Q5AH25"/>
<dbReference type="EnsemblFungi" id="C7_02050C_A-T">
    <property type="protein sequence ID" value="C7_02050C_A-T-p1"/>
    <property type="gene ID" value="C7_02050C_A"/>
</dbReference>
<dbReference type="GeneID" id="3636948"/>
<dbReference type="KEGG" id="cal:CAALFM_C702050CA"/>
<dbReference type="CGD" id="CAL0000174683">
    <property type="gene designation" value="EXO70"/>
</dbReference>
<dbReference type="VEuPathDB" id="FungiDB:C7_02050C_A"/>
<dbReference type="eggNOG" id="KOG2344">
    <property type="taxonomic scope" value="Eukaryota"/>
</dbReference>
<dbReference type="HOGENOM" id="CLU_010236_4_1_1"/>
<dbReference type="InParanoid" id="Q5AH25"/>
<dbReference type="OMA" id="GIIRAGP"/>
<dbReference type="OrthoDB" id="1922221at2759"/>
<dbReference type="Proteomes" id="UP000000559">
    <property type="component" value="Chromosome 7"/>
</dbReference>
<dbReference type="GO" id="GO:0005935">
    <property type="term" value="C:cellular bud neck"/>
    <property type="evidence" value="ECO:0007669"/>
    <property type="project" value="UniProtKB-SubCell"/>
</dbReference>
<dbReference type="GO" id="GO:0000145">
    <property type="term" value="C:exocyst"/>
    <property type="evidence" value="ECO:0000266"/>
    <property type="project" value="CGD"/>
</dbReference>
<dbReference type="GO" id="GO:0001411">
    <property type="term" value="C:hyphal tip"/>
    <property type="evidence" value="ECO:0000314"/>
    <property type="project" value="CGD"/>
</dbReference>
<dbReference type="GO" id="GO:0005546">
    <property type="term" value="F:phosphatidylinositol-4,5-bisphosphate binding"/>
    <property type="evidence" value="ECO:0007669"/>
    <property type="project" value="InterPro"/>
</dbReference>
<dbReference type="GO" id="GO:0006887">
    <property type="term" value="P:exocytosis"/>
    <property type="evidence" value="ECO:0000266"/>
    <property type="project" value="CGD"/>
</dbReference>
<dbReference type="GO" id="GO:0015031">
    <property type="term" value="P:protein transport"/>
    <property type="evidence" value="ECO:0007669"/>
    <property type="project" value="UniProtKB-KW"/>
</dbReference>
<dbReference type="FunFam" id="1.20.58.1150:FF:000002">
    <property type="match status" value="1"/>
</dbReference>
<dbReference type="FunFam" id="1.10.357.60:FF:000002">
    <property type="entry name" value="Exocyst complex protein EXO70"/>
    <property type="match status" value="1"/>
</dbReference>
<dbReference type="Gene3D" id="1.10.357.60">
    <property type="match status" value="1"/>
</dbReference>
<dbReference type="Gene3D" id="1.20.1310.30">
    <property type="match status" value="1"/>
</dbReference>
<dbReference type="Gene3D" id="1.20.58.1150">
    <property type="match status" value="1"/>
</dbReference>
<dbReference type="Gene3D" id="1.20.1280.170">
    <property type="entry name" value="Exocyst complex component Exo70"/>
    <property type="match status" value="1"/>
</dbReference>
<dbReference type="InterPro" id="IPR016159">
    <property type="entry name" value="Cullin_repeat-like_dom_sf"/>
</dbReference>
<dbReference type="InterPro" id="IPR046364">
    <property type="entry name" value="Exo70_C"/>
</dbReference>
<dbReference type="Pfam" id="PF03081">
    <property type="entry name" value="Exo70_C"/>
    <property type="match status" value="1"/>
</dbReference>
<dbReference type="Pfam" id="PF20669">
    <property type="entry name" value="Exo70_N"/>
    <property type="match status" value="1"/>
</dbReference>
<dbReference type="SUPFAM" id="SSF74788">
    <property type="entry name" value="Cullin repeat-like"/>
    <property type="match status" value="1"/>
</dbReference>
<gene>
    <name type="primary">EXO70</name>
    <name type="ordered locus">CAALFM_C702050CA</name>
    <name type="ORF">CaJ7.0236</name>
    <name type="ORF">CaO19.13865</name>
    <name type="ORF">CaO19.6512</name>
</gene>
<reference key="1">
    <citation type="journal article" date="2005" name="Genetics">
        <title>Sequence finishing and gene mapping for Candida albicans chromosome 7 and syntenic analysis against the Saccharomyces cerevisiae genome.</title>
        <authorList>
            <person name="Chibana H."/>
            <person name="Oka N."/>
            <person name="Nakayama H."/>
            <person name="Aoyama T."/>
            <person name="Magee B.B."/>
            <person name="Magee P.T."/>
            <person name="Mikami Y."/>
        </authorList>
    </citation>
    <scope>NUCLEOTIDE SEQUENCE [LARGE SCALE GENOMIC DNA]</scope>
    <source>
        <strain>SC5314 / ATCC MYA-2876</strain>
    </source>
</reference>
<reference key="2">
    <citation type="journal article" date="2004" name="Proc. Natl. Acad. Sci. U.S.A.">
        <title>The diploid genome sequence of Candida albicans.</title>
        <authorList>
            <person name="Jones T."/>
            <person name="Federspiel N.A."/>
            <person name="Chibana H."/>
            <person name="Dungan J."/>
            <person name="Kalman S."/>
            <person name="Magee B.B."/>
            <person name="Newport G."/>
            <person name="Thorstenson Y.R."/>
            <person name="Agabian N."/>
            <person name="Magee P.T."/>
            <person name="Davis R.W."/>
            <person name="Scherer S."/>
        </authorList>
    </citation>
    <scope>NUCLEOTIDE SEQUENCE [LARGE SCALE GENOMIC DNA]</scope>
    <source>
        <strain>SC5314 / ATCC MYA-2876</strain>
    </source>
</reference>
<reference key="3">
    <citation type="journal article" date="2007" name="Genome Biol.">
        <title>Assembly of the Candida albicans genome into sixteen supercontigs aligned on the eight chromosomes.</title>
        <authorList>
            <person name="van het Hoog M."/>
            <person name="Rast T.J."/>
            <person name="Martchenko M."/>
            <person name="Grindle S."/>
            <person name="Dignard D."/>
            <person name="Hogues H."/>
            <person name="Cuomo C."/>
            <person name="Berriman M."/>
            <person name="Scherer S."/>
            <person name="Magee B.B."/>
            <person name="Whiteway M."/>
            <person name="Chibana H."/>
            <person name="Nantel A."/>
            <person name="Magee P.T."/>
        </authorList>
    </citation>
    <scope>GENOME REANNOTATION</scope>
    <source>
        <strain>SC5314 / ATCC MYA-2876</strain>
    </source>
</reference>
<reference key="4">
    <citation type="journal article" date="2013" name="Genome Biol.">
        <title>Assembly of a phased diploid Candida albicans genome facilitates allele-specific measurements and provides a simple model for repeat and indel structure.</title>
        <authorList>
            <person name="Muzzey D."/>
            <person name="Schwartz K."/>
            <person name="Weissman J.S."/>
            <person name="Sherlock G."/>
        </authorList>
    </citation>
    <scope>NUCLEOTIDE SEQUENCE [LARGE SCALE GENOMIC DNA]</scope>
    <scope>GENOME REANNOTATION</scope>
    <source>
        <strain>SC5314 / ATCC MYA-2876</strain>
    </source>
</reference>
<feature type="chain" id="PRO_0000118966" description="Exocyst complex protein EXO70">
    <location>
        <begin position="1"/>
        <end position="667"/>
    </location>
</feature>
<feature type="region of interest" description="Disordered" evidence="2">
    <location>
        <begin position="460"/>
        <end position="483"/>
    </location>
</feature>
<feature type="region of interest" description="Disordered" evidence="2">
    <location>
        <begin position="557"/>
        <end position="579"/>
    </location>
</feature>
<feature type="compositionally biased region" description="Low complexity" evidence="2">
    <location>
        <begin position="557"/>
        <end position="570"/>
    </location>
</feature>
<keyword id="KW-0268">Exocytosis</keyword>
<keyword id="KW-0653">Protein transport</keyword>
<keyword id="KW-1185">Reference proteome</keyword>
<keyword id="KW-0813">Transport</keyword>
<comment type="function">
    <text evidence="1">Involved in the secretory pathway as part of the exocyst complex which tethers secretory vesicles to the sites of exocytosis. Also plays a role in the assembly of the exocyst (By similarity).</text>
</comment>
<comment type="subcellular location">
    <subcellularLocation>
        <location evidence="1">Bud</location>
    </subcellularLocation>
    <subcellularLocation>
        <location evidence="1">Bud neck</location>
    </subcellularLocation>
</comment>
<comment type="similarity">
    <text evidence="3">Belongs to the EXO70 family.</text>
</comment>
<proteinExistence type="inferred from homology"/>
<sequence length="667" mass="76105">MSYNLDVDEADVAVLNQNLIRSKELFESIGKSLHKISTKSQTASSTINPVLKQVNQLTTNKHEVENGLKLLQEVSENASKINDLENLLNNSIENSPGGIKSYLINLNQSKNLLSQIKTQSKFKQFKGILYNFENLIDRSETKVQKYYQDLINGKDSRAIIDKRDEIKLIFQYFSNPQTKSTSNSGGNEEYVTKLYVRARSKRLIEKLKPIESSTKPAVKANANIPYEKGTNGITKYTDVLSGEIEQELIILNECQLSTHLIGPIVEESISRYNGIINKYNQVYFKTPQEIVDNVILILEVLNNLIDFKVKLKQIGLNRTLEQSNFINTFEQYLETNSVIFKEFIQAIDNRFQNLGKFNEINTQEVIVELMSKLRRLSEFKLALLQLIKNYSIGQWLVSQPPMRFVNVFSSVIPNSQPQANSDGEEDEVIQEYLLSSFYSDVIDAIMINIEIGLKKNTSGGDSLPSSSSTSASTNATSGTSSLSLNKKSTQGFILIKNLFMLESIVNRSQYLYQSLGSLGEERILRLKNRFLKLFLDDWSHASYIIIRDMTTIATQSAQHQQSQQQSSNTIGTGGGTVTNLSNKEKDQVKDLFKNFNESFEEALFNYQKYNFGDAILKKYLSNEIKKLILNTYFKLYDKYGNSDFTKNKSKYVKYDKLNFEKLLNERL</sequence>
<organism>
    <name type="scientific">Candida albicans (strain SC5314 / ATCC MYA-2876)</name>
    <name type="common">Yeast</name>
    <dbReference type="NCBI Taxonomy" id="237561"/>
    <lineage>
        <taxon>Eukaryota</taxon>
        <taxon>Fungi</taxon>
        <taxon>Dikarya</taxon>
        <taxon>Ascomycota</taxon>
        <taxon>Saccharomycotina</taxon>
        <taxon>Pichiomycetes</taxon>
        <taxon>Debaryomycetaceae</taxon>
        <taxon>Candida/Lodderomyces clade</taxon>
        <taxon>Candida</taxon>
    </lineage>
</organism>